<dbReference type="EC" id="1.4.99.-" evidence="1"/>
<dbReference type="EMBL" id="CP000644">
    <property type="protein sequence ID" value="ABO90382.1"/>
    <property type="molecule type" value="Genomic_DNA"/>
</dbReference>
<dbReference type="RefSeq" id="WP_005310937.1">
    <property type="nucleotide sequence ID" value="NC_009348.1"/>
</dbReference>
<dbReference type="SMR" id="A4SNB0"/>
<dbReference type="STRING" id="29491.GCA_000820065_01596"/>
<dbReference type="KEGG" id="asa:ASA_2333"/>
<dbReference type="PATRIC" id="fig|382245.13.peg.2287"/>
<dbReference type="eggNOG" id="COG0665">
    <property type="taxonomic scope" value="Bacteria"/>
</dbReference>
<dbReference type="HOGENOM" id="CLU_007884_9_2_6"/>
<dbReference type="UniPathway" id="UPA00043">
    <property type="reaction ID" value="UER00498"/>
</dbReference>
<dbReference type="Proteomes" id="UP000000225">
    <property type="component" value="Chromosome"/>
</dbReference>
<dbReference type="GO" id="GO:0005737">
    <property type="term" value="C:cytoplasm"/>
    <property type="evidence" value="ECO:0007669"/>
    <property type="project" value="TreeGrafter"/>
</dbReference>
<dbReference type="GO" id="GO:0005886">
    <property type="term" value="C:plasma membrane"/>
    <property type="evidence" value="ECO:0007669"/>
    <property type="project" value="TreeGrafter"/>
</dbReference>
<dbReference type="GO" id="GO:0008718">
    <property type="term" value="F:D-amino-acid dehydrogenase activity"/>
    <property type="evidence" value="ECO:0007669"/>
    <property type="project" value="UniProtKB-UniRule"/>
</dbReference>
<dbReference type="GO" id="GO:0055130">
    <property type="term" value="P:D-alanine catabolic process"/>
    <property type="evidence" value="ECO:0007669"/>
    <property type="project" value="UniProtKB-UniPathway"/>
</dbReference>
<dbReference type="FunFam" id="3.50.50.60:FF:000020">
    <property type="entry name" value="D-amino acid dehydrogenase"/>
    <property type="match status" value="1"/>
</dbReference>
<dbReference type="Gene3D" id="3.30.9.10">
    <property type="entry name" value="D-Amino Acid Oxidase, subunit A, domain 2"/>
    <property type="match status" value="1"/>
</dbReference>
<dbReference type="Gene3D" id="3.50.50.60">
    <property type="entry name" value="FAD/NAD(P)-binding domain"/>
    <property type="match status" value="2"/>
</dbReference>
<dbReference type="HAMAP" id="MF_01202">
    <property type="entry name" value="DadA"/>
    <property type="match status" value="1"/>
</dbReference>
<dbReference type="InterPro" id="IPR023080">
    <property type="entry name" value="DadA"/>
</dbReference>
<dbReference type="InterPro" id="IPR006076">
    <property type="entry name" value="FAD-dep_OxRdtase"/>
</dbReference>
<dbReference type="InterPro" id="IPR036188">
    <property type="entry name" value="FAD/NAD-bd_sf"/>
</dbReference>
<dbReference type="NCBIfam" id="NF001933">
    <property type="entry name" value="PRK00711.1"/>
    <property type="match status" value="1"/>
</dbReference>
<dbReference type="PANTHER" id="PTHR13847:SF280">
    <property type="entry name" value="D-AMINO ACID DEHYDROGENASE"/>
    <property type="match status" value="1"/>
</dbReference>
<dbReference type="PANTHER" id="PTHR13847">
    <property type="entry name" value="SARCOSINE DEHYDROGENASE-RELATED"/>
    <property type="match status" value="1"/>
</dbReference>
<dbReference type="Pfam" id="PF01266">
    <property type="entry name" value="DAO"/>
    <property type="match status" value="1"/>
</dbReference>
<dbReference type="SUPFAM" id="SSF54373">
    <property type="entry name" value="FAD-linked reductases, C-terminal domain"/>
    <property type="match status" value="1"/>
</dbReference>
<dbReference type="SUPFAM" id="SSF51905">
    <property type="entry name" value="FAD/NAD(P)-binding domain"/>
    <property type="match status" value="1"/>
</dbReference>
<feature type="chain" id="PRO_1000066068" description="D-amino acid dehydrogenase">
    <location>
        <begin position="1"/>
        <end position="417"/>
    </location>
</feature>
<feature type="binding site" evidence="1">
    <location>
        <begin position="3"/>
        <end position="17"/>
    </location>
    <ligand>
        <name>FAD</name>
        <dbReference type="ChEBI" id="CHEBI:57692"/>
    </ligand>
</feature>
<gene>
    <name evidence="1" type="primary">dadA</name>
    <name type="ordered locus">ASA_2333</name>
</gene>
<reference key="1">
    <citation type="journal article" date="2008" name="BMC Genomics">
        <title>The genome of Aeromonas salmonicida subsp. salmonicida A449: insights into the evolution of a fish pathogen.</title>
        <authorList>
            <person name="Reith M.E."/>
            <person name="Singh R.K."/>
            <person name="Curtis B."/>
            <person name="Boyd J.M."/>
            <person name="Bouevitch A."/>
            <person name="Kimball J."/>
            <person name="Munholland J."/>
            <person name="Murphy C."/>
            <person name="Sarty D."/>
            <person name="Williams J."/>
            <person name="Nash J.H."/>
            <person name="Johnson S.C."/>
            <person name="Brown L.L."/>
        </authorList>
    </citation>
    <scope>NUCLEOTIDE SEQUENCE [LARGE SCALE GENOMIC DNA]</scope>
    <source>
        <strain>A449</strain>
    </source>
</reference>
<proteinExistence type="inferred from homology"/>
<organism>
    <name type="scientific">Aeromonas salmonicida (strain A449)</name>
    <dbReference type="NCBI Taxonomy" id="382245"/>
    <lineage>
        <taxon>Bacteria</taxon>
        <taxon>Pseudomonadati</taxon>
        <taxon>Pseudomonadota</taxon>
        <taxon>Gammaproteobacteria</taxon>
        <taxon>Aeromonadales</taxon>
        <taxon>Aeromonadaceae</taxon>
        <taxon>Aeromonas</taxon>
    </lineage>
</organism>
<comment type="function">
    <text evidence="1">Oxidative deamination of D-amino acids.</text>
</comment>
<comment type="catalytic activity">
    <reaction evidence="1">
        <text>a D-alpha-amino acid + A + H2O = a 2-oxocarboxylate + AH2 + NH4(+)</text>
        <dbReference type="Rhea" id="RHEA:18125"/>
        <dbReference type="ChEBI" id="CHEBI:13193"/>
        <dbReference type="ChEBI" id="CHEBI:15377"/>
        <dbReference type="ChEBI" id="CHEBI:17499"/>
        <dbReference type="ChEBI" id="CHEBI:28938"/>
        <dbReference type="ChEBI" id="CHEBI:35179"/>
        <dbReference type="ChEBI" id="CHEBI:59871"/>
    </reaction>
</comment>
<comment type="cofactor">
    <cofactor evidence="1">
        <name>FAD</name>
        <dbReference type="ChEBI" id="CHEBI:57692"/>
    </cofactor>
</comment>
<comment type="pathway">
    <text>Amino-acid degradation; D-alanine degradation; NH(3) and pyruvate from D-alanine: step 1/1.</text>
</comment>
<comment type="similarity">
    <text evidence="1">Belongs to the DadA oxidoreductase family.</text>
</comment>
<name>DADA_AERS4</name>
<accession>A4SNB0</accession>
<sequence>MDIVVLGGGVVGVTSAWYLAKAGHKVTLLERRDGVALETSHANAGQISPGYAAPWAAPGIPLKAAKWLLQKHAPFTVRPTSDPFQLRWMLKMFANCTPAAYATNKGRMVRLAEYSRDCMKTLRDELALDYEGRQLGTLQLFRSQAQLDASKRDIEVLEEYGVPYQSLDASGCEGVEPALARVRGKIVGGLRLPGDETGDCFRFTKALAAEAQKLGVEFVFNCAIDEIELSLGRAVAVRAGEQRFKADAIVCALGSYATGFLRPLGIDLPVYPVKGYSLTLPMTDADAVPRSTVLDETYKVAITRFNERIRVGGMAELSGFNLALNPKRYDTLAMVVGDLFPEGGDISRAEFWTGLRPMTPDGTPLVGPSPVPGLWLNTGHGTLGWTMAAGSGQLLSDLISGSSTAISDEGLTLARYG</sequence>
<evidence type="ECO:0000255" key="1">
    <source>
        <dbReference type="HAMAP-Rule" id="MF_01202"/>
    </source>
</evidence>
<protein>
    <recommendedName>
        <fullName evidence="1">D-amino acid dehydrogenase</fullName>
        <ecNumber evidence="1">1.4.99.-</ecNumber>
    </recommendedName>
</protein>
<keyword id="KW-0274">FAD</keyword>
<keyword id="KW-0285">Flavoprotein</keyword>
<keyword id="KW-0560">Oxidoreductase</keyword>